<organism>
    <name type="scientific">Proteus mirabilis</name>
    <dbReference type="NCBI Taxonomy" id="584"/>
    <lineage>
        <taxon>Bacteria</taxon>
        <taxon>Pseudomonadati</taxon>
        <taxon>Pseudomonadota</taxon>
        <taxon>Gammaproteobacteria</taxon>
        <taxon>Enterobacterales</taxon>
        <taxon>Morganellaceae</taxon>
        <taxon>Proteus</taxon>
    </lineage>
</organism>
<name>HLYA_PROMI</name>
<sequence>MKSKNFKLSPSGRLAASLAIIFVSLNAYGNGIVPDAGHQGPDVSAVNGGTQVINIVTPNNEGISHNQYQDFNVGKPGAVFNNALEAGQSQLAGHLNANSNLNGQAASLILNEVVSRNPSFLLGQQEVFGIAAEYVLSNPNGITCDGCGFINTSRSSLVVGNPLFENGQLKGYSTLNNTNLLSLGKNGLNTTGLLDLIAPRIDSRGKITAAEISAFTGQNTFSQHFDILSSQKPVSALDSYFFGSMQSGRIRIINTAEGSGVKLAGKFTADNDLSVKADNIQTDSQVRYDSYDKDGSENYQNYRGGITVNNSGSSQTLTKTELKGKNITLVASSHNQIKASDLMGDDITLQGADLTIDGKQLQQKETDIDNRWFYSWKYDVTKEKEQIQQIGSQIDAKNNATLTATKGDVTLDAAKINAGNNLAINANKDIHINGLVEKESRSENGNKRNHTSRLESGSWSNSHQTETLKASELTAGKDLGLDAQGSITAQGAKLHANENVLVNAKDNINLNVQKTNNDKTVTDNHVMWGGIGGGQNKNNNNQQQVSHATQLTADGQLLLAADNNVNITGSQVKGNQGAFVKTTQGDVVIDNALSETISKIDERTGTAFNITKSSHKNETNKQTSTGSELISDAQLTVVSGNDVNVIGSLIKSADKLGIHSLGDINVKSAQQVTKIDDEKTSLAITGHAKEVEDKQYSAGFHITHTTNKNTSTETEQANSTISGANVDLQANKDVTFAGSDLKTTAGNASITGDNVAFVSTENKKQTDNTDTTISGGFSYTGGVDKVGSKADFQYDKQHTQTEVTKNRGSQTEVAGDLTITANKDLLHEGASHHVEGRYQESGENIQHLAVNDSETSKTDSLNVGIDVGVNLDYSGVTKPVKKAIEDGVNTTKPGNNTDLTKKVTARDAIANLANLSNLETPNVGVEVGIKGGGSQQSQTDSQAVSTSINAGKIDIDSNNKLHDQGTHYQSTQEGISLTANTHTSEATLDKHQTTFHETKGGGQIGVSTKTGSDITVAIKGEGQTTDNALMETKAKGSQFTSNGDISINVGENAHYEGAQFDAQKGKTVINAGGDLTLAQATDTHSESQSNVNGSANLKVGTTPESKDYGGGFNAGTTHHSKEQTTAKVGTITGSQGIELNAGHNLTLQGTHLSSEQDIALNATNKVDLQSASSEHTEKGNNLSGGVQAGFGKKMTDDASSVNGLGSAQFAIGKQDEKSVSREGGTINNSGNLTINGNSVHLQGAQVNSKDTQLTSQSGDIEITSAQSTDYKNNWGTDIGFNGKKTNNTPKEVTEEKPATSIHNIGGKLLVNVEDQQKTSHQNATLETGTLTINSNKDLTLSGANVTADSVTGNVGGSLNIASQKESDRHVTVGVNVGYNHTNDPKSSQVNKTAKAGGSLLEKTIKDTIDSGIKSSTDAISDKYNSLSSTIADKTGISDETKAKIDQGFGKVGNGIKNIVTGAEGHTANADIKVTHVDNDAVTKTTSLTSNNDLSLNVNGSTKLTGAEIVSQQGQVDLGGSSVKLENIEGHHYEAGADLDLKSSVVDLAKQLVGGDISFKSPVKTNETVNTKASISEK</sequence>
<evidence type="ECO:0000256" key="1">
    <source>
        <dbReference type="SAM" id="MobiDB-lite"/>
    </source>
</evidence>
<evidence type="ECO:0000269" key="2">
    <source>
    </source>
</evidence>
<evidence type="ECO:0007829" key="3">
    <source>
        <dbReference type="PDB" id="4W8Q"/>
    </source>
</evidence>
<evidence type="ECO:0007829" key="4">
    <source>
        <dbReference type="PDB" id="5SZ8"/>
    </source>
</evidence>
<evidence type="ECO:0007829" key="5">
    <source>
        <dbReference type="PDB" id="6PYK"/>
    </source>
</evidence>
<evidence type="ECO:0007829" key="6">
    <source>
        <dbReference type="PDB" id="6PZL"/>
    </source>
</evidence>
<proteinExistence type="evidence at protein level"/>
<feature type="signal peptide" evidence="2">
    <location>
        <begin position="1"/>
        <end position="29"/>
    </location>
</feature>
<feature type="chain" id="PRO_0000013355" description="Hemolysin">
    <location>
        <begin position="30"/>
        <end position="1577"/>
    </location>
</feature>
<feature type="region of interest" description="Disordered" evidence="1">
    <location>
        <begin position="437"/>
        <end position="467"/>
    </location>
</feature>
<feature type="region of interest" description="Disordered" evidence="1">
    <location>
        <begin position="1081"/>
        <end position="1103"/>
    </location>
</feature>
<feature type="region of interest" description="Disordered" evidence="1">
    <location>
        <begin position="1169"/>
        <end position="1188"/>
    </location>
</feature>
<feature type="region of interest" description="Disordered" evidence="1">
    <location>
        <begin position="1213"/>
        <end position="1232"/>
    </location>
</feature>
<feature type="compositionally biased region" description="Basic and acidic residues" evidence="1">
    <location>
        <begin position="437"/>
        <end position="446"/>
    </location>
</feature>
<feature type="compositionally biased region" description="Polar residues" evidence="1">
    <location>
        <begin position="454"/>
        <end position="467"/>
    </location>
</feature>
<feature type="compositionally biased region" description="Polar residues" evidence="1">
    <location>
        <begin position="1081"/>
        <end position="1095"/>
    </location>
</feature>
<feature type="compositionally biased region" description="Polar residues" evidence="1">
    <location>
        <begin position="1169"/>
        <end position="1184"/>
    </location>
</feature>
<feature type="strand" evidence="4">
    <location>
        <begin position="32"/>
        <end position="34"/>
    </location>
</feature>
<feature type="strand" evidence="6">
    <location>
        <begin position="42"/>
        <end position="47"/>
    </location>
</feature>
<feature type="strand" evidence="6">
    <location>
        <begin position="50"/>
        <end position="54"/>
    </location>
</feature>
<feature type="strand" evidence="6">
    <location>
        <begin position="62"/>
        <end position="70"/>
    </location>
</feature>
<feature type="strand" evidence="6">
    <location>
        <begin position="78"/>
        <end position="82"/>
    </location>
</feature>
<feature type="strand" evidence="5">
    <location>
        <begin position="87"/>
        <end position="89"/>
    </location>
</feature>
<feature type="strand" evidence="6">
    <location>
        <begin position="90"/>
        <end position="95"/>
    </location>
</feature>
<feature type="helix" evidence="6">
    <location>
        <begin position="99"/>
        <end position="101"/>
    </location>
</feature>
<feature type="strand" evidence="6">
    <location>
        <begin position="107"/>
        <end position="113"/>
    </location>
</feature>
<feature type="strand" evidence="6">
    <location>
        <begin position="119"/>
        <end position="121"/>
    </location>
</feature>
<feature type="strand" evidence="6">
    <location>
        <begin position="123"/>
        <end position="130"/>
    </location>
</feature>
<feature type="strand" evidence="6">
    <location>
        <begin position="132"/>
        <end position="137"/>
    </location>
</feature>
<feature type="strand" evidence="6">
    <location>
        <begin position="142"/>
        <end position="165"/>
    </location>
</feature>
<feature type="strand" evidence="6">
    <location>
        <begin position="168"/>
        <end position="173"/>
    </location>
</feature>
<feature type="strand" evidence="6">
    <location>
        <begin position="180"/>
        <end position="183"/>
    </location>
</feature>
<feature type="strand" evidence="6">
    <location>
        <begin position="188"/>
        <end position="203"/>
    </location>
</feature>
<feature type="strand" evidence="6">
    <location>
        <begin position="205"/>
        <end position="208"/>
    </location>
</feature>
<feature type="strand" evidence="6">
    <location>
        <begin position="210"/>
        <end position="221"/>
    </location>
</feature>
<feature type="strand" evidence="6">
    <location>
        <begin position="227"/>
        <end position="231"/>
    </location>
</feature>
<feature type="strand" evidence="5">
    <location>
        <begin position="239"/>
        <end position="241"/>
    </location>
</feature>
<feature type="strand" evidence="6">
    <location>
        <begin position="243"/>
        <end position="246"/>
    </location>
</feature>
<feature type="strand" evidence="6">
    <location>
        <begin position="250"/>
        <end position="254"/>
    </location>
</feature>
<feature type="strand" evidence="3">
    <location>
        <begin position="256"/>
        <end position="258"/>
    </location>
</feature>
<feature type="strand" evidence="5">
    <location>
        <begin position="261"/>
        <end position="263"/>
    </location>
</feature>
<dbReference type="EMBL" id="M30186">
    <property type="protein sequence ID" value="AAA25657.1"/>
    <property type="molecule type" value="Genomic_DNA"/>
</dbReference>
<dbReference type="PIR" id="A35140">
    <property type="entry name" value="A35140"/>
</dbReference>
<dbReference type="PDB" id="3FY3">
    <property type="method" value="X-ray"/>
    <property type="resolution" value="1.80 A"/>
    <property type="chains" value="A=30-265"/>
</dbReference>
<dbReference type="PDB" id="4W8Q">
    <property type="method" value="X-ray"/>
    <property type="resolution" value="1.43 A"/>
    <property type="chains" value="A=30-265"/>
</dbReference>
<dbReference type="PDB" id="4W8R">
    <property type="method" value="X-ray"/>
    <property type="resolution" value="1.52 A"/>
    <property type="chains" value="A=30-263"/>
</dbReference>
<dbReference type="PDB" id="4W8S">
    <property type="method" value="X-ray"/>
    <property type="resolution" value="1.51 A"/>
    <property type="chains" value="A=30-263"/>
</dbReference>
<dbReference type="PDB" id="4W8T">
    <property type="method" value="X-ray"/>
    <property type="resolution" value="1.54 A"/>
    <property type="chains" value="A=30-263"/>
</dbReference>
<dbReference type="PDB" id="5KDK">
    <property type="method" value="X-ray"/>
    <property type="resolution" value="2.00 A"/>
    <property type="chains" value="A=30-265"/>
</dbReference>
<dbReference type="PDB" id="5KEH">
    <property type="method" value="X-ray"/>
    <property type="resolution" value="1.55 A"/>
    <property type="chains" value="A=30-265"/>
</dbReference>
<dbReference type="PDB" id="5KF3">
    <property type="method" value="X-ray"/>
    <property type="resolution" value="2.20 A"/>
    <property type="chains" value="A=30-265"/>
</dbReference>
<dbReference type="PDB" id="5KKD">
    <property type="method" value="X-ray"/>
    <property type="resolution" value="2.13 A"/>
    <property type="chains" value="A/B=30-265"/>
</dbReference>
<dbReference type="PDB" id="5SZ8">
    <property type="method" value="X-ray"/>
    <property type="resolution" value="1.83 A"/>
    <property type="chains" value="A/B=30-234"/>
</dbReference>
<dbReference type="PDB" id="6PYK">
    <property type="method" value="X-ray"/>
    <property type="resolution" value="1.35 A"/>
    <property type="chains" value="A=30-265"/>
</dbReference>
<dbReference type="PDB" id="6PZL">
    <property type="method" value="X-ray"/>
    <property type="resolution" value="1.17 A"/>
    <property type="chains" value="A=30-265"/>
</dbReference>
<dbReference type="PDB" id="6Q0P">
    <property type="method" value="X-ray"/>
    <property type="resolution" value="1.54 A"/>
    <property type="chains" value="A=30-265"/>
</dbReference>
<dbReference type="PDBsum" id="3FY3"/>
<dbReference type="PDBsum" id="4W8Q"/>
<dbReference type="PDBsum" id="4W8R"/>
<dbReference type="PDBsum" id="4W8S"/>
<dbReference type="PDBsum" id="4W8T"/>
<dbReference type="PDBsum" id="5KDK"/>
<dbReference type="PDBsum" id="5KEH"/>
<dbReference type="PDBsum" id="5KF3"/>
<dbReference type="PDBsum" id="5KKD"/>
<dbReference type="PDBsum" id="5SZ8"/>
<dbReference type="PDBsum" id="6PYK"/>
<dbReference type="PDBsum" id="6PZL"/>
<dbReference type="PDBsum" id="6Q0P"/>
<dbReference type="SMR" id="P16466"/>
<dbReference type="STRING" id="584.AOUC001_04490"/>
<dbReference type="EvolutionaryTrace" id="P16466"/>
<dbReference type="GO" id="GO:0009279">
    <property type="term" value="C:cell outer membrane"/>
    <property type="evidence" value="ECO:0007669"/>
    <property type="project" value="UniProtKB-SubCell"/>
</dbReference>
<dbReference type="GO" id="GO:0003824">
    <property type="term" value="F:catalytic activity"/>
    <property type="evidence" value="ECO:0007669"/>
    <property type="project" value="UniProtKB-ARBA"/>
</dbReference>
<dbReference type="GO" id="GO:0090729">
    <property type="term" value="F:toxin activity"/>
    <property type="evidence" value="ECO:0007669"/>
    <property type="project" value="UniProtKB-KW"/>
</dbReference>
<dbReference type="GO" id="GO:0031640">
    <property type="term" value="P:killing of cells of another organism"/>
    <property type="evidence" value="ECO:0007669"/>
    <property type="project" value="UniProtKB-KW"/>
</dbReference>
<dbReference type="Gene3D" id="2.160.20.10">
    <property type="entry name" value="Single-stranded right-handed beta-helix, Pectin lyase-like"/>
    <property type="match status" value="1"/>
</dbReference>
<dbReference type="InterPro" id="IPR008638">
    <property type="entry name" value="FhaB/CdiA-like_TPS"/>
</dbReference>
<dbReference type="InterPro" id="IPR025157">
    <property type="entry name" value="Hemagglutinin_rpt"/>
</dbReference>
<dbReference type="InterPro" id="IPR012334">
    <property type="entry name" value="Pectin_lyas_fold"/>
</dbReference>
<dbReference type="InterPro" id="IPR011050">
    <property type="entry name" value="Pectin_lyase_fold/virulence"/>
</dbReference>
<dbReference type="NCBIfam" id="TIGR01901">
    <property type="entry name" value="adhes_NPXG"/>
    <property type="match status" value="1"/>
</dbReference>
<dbReference type="Pfam" id="PF13332">
    <property type="entry name" value="Fil_haemagg_2"/>
    <property type="match status" value="7"/>
</dbReference>
<dbReference type="Pfam" id="PF05860">
    <property type="entry name" value="TPS"/>
    <property type="match status" value="1"/>
</dbReference>
<dbReference type="SMART" id="SM00912">
    <property type="entry name" value="Haemagg_act"/>
    <property type="match status" value="1"/>
</dbReference>
<dbReference type="SUPFAM" id="SSF51126">
    <property type="entry name" value="Pectin lyase-like"/>
    <property type="match status" value="1"/>
</dbReference>
<comment type="function">
    <text>Bacterial hemolysins are exotoxins that attack blood cell membranes and cause cell rupture by mechanisms not clearly defined.</text>
</comment>
<comment type="function">
    <text>Cell-bound hemolysin, which releases heme-iron from erythrocytes by interaction with the erythrocyte membrane. HpmA requires HpmB function.</text>
</comment>
<comment type="subcellular location">
    <subcellularLocation>
        <location>Cell outer membrane</location>
    </subcellularLocation>
</comment>
<comment type="miscellaneous">
    <text>The conserved amphipathic domains in ShlA and HpmA may be responsible for pore formation.</text>
</comment>
<protein>
    <recommendedName>
        <fullName>Hemolysin</fullName>
    </recommendedName>
</protein>
<keyword id="KW-0002">3D-structure</keyword>
<keyword id="KW-0998">Cell outer membrane</keyword>
<keyword id="KW-0204">Cytolysis</keyword>
<keyword id="KW-0903">Direct protein sequencing</keyword>
<keyword id="KW-0354">Hemolysis</keyword>
<keyword id="KW-0472">Membrane</keyword>
<keyword id="KW-0732">Signal</keyword>
<keyword id="KW-0800">Toxin</keyword>
<keyword id="KW-0843">Virulence</keyword>
<reference key="1">
    <citation type="journal article" date="1990" name="J. Bacteriol.">
        <title>Nucleotide sequencing of the Proteus mirabilis calcium-independent hemolysin genes (hpmA and hpmB) reveals sequence similarity with the Serratia marcescens hemolysin genes (shlA and shlB).</title>
        <authorList>
            <person name="Uphoff T.S."/>
            <person name="Welch R.A."/>
        </authorList>
    </citation>
    <scope>NUCLEOTIDE SEQUENCE [GENOMIC DNA]</scope>
    <scope>PROTEIN SEQUENCE OF 30-43</scope>
    <source>
        <strain>Isolate 477-12</strain>
    </source>
</reference>
<accession>P16466</accession>
<gene>
    <name type="primary">hpmA</name>
</gene>